<protein>
    <recommendedName>
        <fullName>Zinc metalloproteinase nas-39</fullName>
        <ecNumber evidence="1">3.4.24.-</ecNumber>
    </recommendedName>
    <alternativeName>
        <fullName>Nematode astacin 39</fullName>
    </alternativeName>
</protein>
<keyword id="KW-1015">Disulfide bond</keyword>
<keyword id="KW-0245">EGF-like domain</keyword>
<keyword id="KW-0325">Glycoprotein</keyword>
<keyword id="KW-0378">Hydrolase</keyword>
<keyword id="KW-0479">Metal-binding</keyword>
<keyword id="KW-0482">Metalloprotease</keyword>
<keyword id="KW-0645">Protease</keyword>
<keyword id="KW-1185">Reference proteome</keyword>
<keyword id="KW-0677">Repeat</keyword>
<keyword id="KW-0964">Secreted</keyword>
<keyword id="KW-0732">Signal</keyword>
<keyword id="KW-0862">Zinc</keyword>
<keyword id="KW-0865">Zymogen</keyword>
<gene>
    <name evidence="10" type="primary">nas-39</name>
    <name evidence="10" type="ORF">F38E9.2</name>
</gene>
<evidence type="ECO:0000250" key="1">
    <source>
        <dbReference type="UniProtKB" id="A8Q2D1"/>
    </source>
</evidence>
<evidence type="ECO:0000250" key="2">
    <source>
        <dbReference type="UniProtKB" id="P07584"/>
    </source>
</evidence>
<evidence type="ECO:0000255" key="3"/>
<evidence type="ECO:0000255" key="4">
    <source>
        <dbReference type="PROSITE-ProRule" id="PRU00059"/>
    </source>
</evidence>
<evidence type="ECO:0000255" key="5">
    <source>
        <dbReference type="PROSITE-ProRule" id="PRU00076"/>
    </source>
</evidence>
<evidence type="ECO:0000255" key="6">
    <source>
        <dbReference type="PROSITE-ProRule" id="PRU01211"/>
    </source>
</evidence>
<evidence type="ECO:0000256" key="7">
    <source>
        <dbReference type="SAM" id="MobiDB-lite"/>
    </source>
</evidence>
<evidence type="ECO:0000269" key="8">
    <source>
    </source>
</evidence>
<evidence type="ECO:0000305" key="9"/>
<evidence type="ECO:0000312" key="10">
    <source>
        <dbReference type="WormBase" id="F38E9.2"/>
    </source>
</evidence>
<name>NAS39_CAEEL</name>
<organism>
    <name type="scientific">Caenorhabditis elegans</name>
    <dbReference type="NCBI Taxonomy" id="6239"/>
    <lineage>
        <taxon>Eukaryota</taxon>
        <taxon>Metazoa</taxon>
        <taxon>Ecdysozoa</taxon>
        <taxon>Nematoda</taxon>
        <taxon>Chromadorea</taxon>
        <taxon>Rhabditida</taxon>
        <taxon>Rhabditina</taxon>
        <taxon>Rhabditomorpha</taxon>
        <taxon>Rhabditoidea</taxon>
        <taxon>Rhabditidae</taxon>
        <taxon>Peloderinae</taxon>
        <taxon>Caenorhabditis</taxon>
    </lineage>
</organism>
<dbReference type="EC" id="3.4.24.-" evidence="1"/>
<dbReference type="EMBL" id="BX284606">
    <property type="protein sequence ID" value="CCD70820.2"/>
    <property type="molecule type" value="Genomic_DNA"/>
</dbReference>
<dbReference type="PIR" id="T30018">
    <property type="entry name" value="T30018"/>
</dbReference>
<dbReference type="RefSeq" id="NP_001360030.1">
    <property type="nucleotide sequence ID" value="NM_001373610.4"/>
</dbReference>
<dbReference type="RefSeq" id="NP_510672.2">
    <property type="nucleotide sequence ID" value="NM_078271.4"/>
</dbReference>
<dbReference type="SMR" id="Q20176"/>
<dbReference type="FunCoup" id="Q20176">
    <property type="interactions" value="264"/>
</dbReference>
<dbReference type="STRING" id="6239.F38E9.2.1"/>
<dbReference type="MEROPS" id="M12.A24"/>
<dbReference type="GlyCosmos" id="Q20176">
    <property type="glycosylation" value="7 sites, No reported glycans"/>
</dbReference>
<dbReference type="PaxDb" id="6239-F38E9.2"/>
<dbReference type="EnsemblMetazoa" id="F38E9.2.1">
    <property type="protein sequence ID" value="F38E9.2.1"/>
    <property type="gene ID" value="WBGene00003555"/>
</dbReference>
<dbReference type="EnsemblMetazoa" id="F38E9.2.2">
    <property type="protein sequence ID" value="F38E9.2.2"/>
    <property type="gene ID" value="WBGene00003555"/>
</dbReference>
<dbReference type="GeneID" id="3565986"/>
<dbReference type="UCSC" id="F38E9.2">
    <property type="organism name" value="c. elegans"/>
</dbReference>
<dbReference type="AGR" id="WB:WBGene00003555"/>
<dbReference type="WormBase" id="F38E9.2">
    <property type="protein sequence ID" value="CE53415"/>
    <property type="gene ID" value="WBGene00003555"/>
    <property type="gene designation" value="nas-39"/>
</dbReference>
<dbReference type="eggNOG" id="KOG3714">
    <property type="taxonomic scope" value="Eukaryota"/>
</dbReference>
<dbReference type="GeneTree" id="ENSGT00940000167878"/>
<dbReference type="HOGENOM" id="CLU_005140_0_0_1"/>
<dbReference type="InParanoid" id="Q20176"/>
<dbReference type="OrthoDB" id="431034at2759"/>
<dbReference type="PhylomeDB" id="Q20176"/>
<dbReference type="Reactome" id="R-CEL-1474228">
    <property type="pathway name" value="Degradation of the extracellular matrix"/>
</dbReference>
<dbReference type="Reactome" id="R-CEL-1650814">
    <property type="pathway name" value="Collagen biosynthesis and modifying enzymes"/>
</dbReference>
<dbReference type="Reactome" id="R-CEL-2214320">
    <property type="pathway name" value="Anchoring fibril formation"/>
</dbReference>
<dbReference type="PRO" id="PR:Q20176"/>
<dbReference type="Proteomes" id="UP000001940">
    <property type="component" value="Chromosome X"/>
</dbReference>
<dbReference type="Bgee" id="WBGene00003555">
    <property type="expression patterns" value="Expressed in embryo and 2 other cell types or tissues"/>
</dbReference>
<dbReference type="GO" id="GO:0005615">
    <property type="term" value="C:extracellular space"/>
    <property type="evidence" value="ECO:0000318"/>
    <property type="project" value="GO_Central"/>
</dbReference>
<dbReference type="GO" id="GO:0005509">
    <property type="term" value="F:calcium ion binding"/>
    <property type="evidence" value="ECO:0007669"/>
    <property type="project" value="InterPro"/>
</dbReference>
<dbReference type="GO" id="GO:0004222">
    <property type="term" value="F:metalloendopeptidase activity"/>
    <property type="evidence" value="ECO:0000318"/>
    <property type="project" value="GO_Central"/>
</dbReference>
<dbReference type="GO" id="GO:0008237">
    <property type="term" value="F:metallopeptidase activity"/>
    <property type="evidence" value="ECO:0000250"/>
    <property type="project" value="WormBase"/>
</dbReference>
<dbReference type="GO" id="GO:0008270">
    <property type="term" value="F:zinc ion binding"/>
    <property type="evidence" value="ECO:0007669"/>
    <property type="project" value="InterPro"/>
</dbReference>
<dbReference type="GO" id="GO:0009953">
    <property type="term" value="P:dorsal/ventral pattern formation"/>
    <property type="evidence" value="ECO:0000318"/>
    <property type="project" value="GO_Central"/>
</dbReference>
<dbReference type="GO" id="GO:0016485">
    <property type="term" value="P:protein processing"/>
    <property type="evidence" value="ECO:0000318"/>
    <property type="project" value="GO_Central"/>
</dbReference>
<dbReference type="CDD" id="cd00041">
    <property type="entry name" value="CUB"/>
    <property type="match status" value="5"/>
</dbReference>
<dbReference type="CDD" id="cd00054">
    <property type="entry name" value="EGF_CA"/>
    <property type="match status" value="2"/>
</dbReference>
<dbReference type="CDD" id="cd04281">
    <property type="entry name" value="ZnMc_BMP1_TLD"/>
    <property type="match status" value="1"/>
</dbReference>
<dbReference type="FunFam" id="2.60.120.290:FF:000013">
    <property type="entry name" value="Membrane frizzled-related protein"/>
    <property type="match status" value="2"/>
</dbReference>
<dbReference type="FunFam" id="3.40.390.10:FF:000004">
    <property type="entry name" value="Metalloendopeptidase"/>
    <property type="match status" value="1"/>
</dbReference>
<dbReference type="FunFam" id="2.60.120.290:FF:000003">
    <property type="entry name" value="Neuropilin"/>
    <property type="match status" value="1"/>
</dbReference>
<dbReference type="FunFam" id="2.60.120.290:FF:000005">
    <property type="entry name" value="Procollagen C-endopeptidase enhancer 1"/>
    <property type="match status" value="1"/>
</dbReference>
<dbReference type="FunFam" id="2.10.25.10:FF:000240">
    <property type="entry name" value="Vitamin K-dependent protein S"/>
    <property type="match status" value="1"/>
</dbReference>
<dbReference type="Gene3D" id="3.40.390.10">
    <property type="entry name" value="Collagenase (Catalytic Domain)"/>
    <property type="match status" value="1"/>
</dbReference>
<dbReference type="Gene3D" id="2.10.25.10">
    <property type="entry name" value="Laminin"/>
    <property type="match status" value="2"/>
</dbReference>
<dbReference type="Gene3D" id="2.60.120.290">
    <property type="entry name" value="Spermadhesin, CUB domain"/>
    <property type="match status" value="5"/>
</dbReference>
<dbReference type="InterPro" id="IPR015446">
    <property type="entry name" value="BMP_1/tolloid-like"/>
</dbReference>
<dbReference type="InterPro" id="IPR000859">
    <property type="entry name" value="CUB_dom"/>
</dbReference>
<dbReference type="InterPro" id="IPR001881">
    <property type="entry name" value="EGF-like_Ca-bd_dom"/>
</dbReference>
<dbReference type="InterPro" id="IPR000742">
    <property type="entry name" value="EGF-like_dom"/>
</dbReference>
<dbReference type="InterPro" id="IPR000152">
    <property type="entry name" value="EGF-type_Asp/Asn_hydroxyl_site"/>
</dbReference>
<dbReference type="InterPro" id="IPR018097">
    <property type="entry name" value="EGF_Ca-bd_CS"/>
</dbReference>
<dbReference type="InterPro" id="IPR024079">
    <property type="entry name" value="MetalloPept_cat_dom_sf"/>
</dbReference>
<dbReference type="InterPro" id="IPR049883">
    <property type="entry name" value="NOTCH1_EGF-like"/>
</dbReference>
<dbReference type="InterPro" id="IPR001506">
    <property type="entry name" value="Peptidase_M12A"/>
</dbReference>
<dbReference type="InterPro" id="IPR006026">
    <property type="entry name" value="Peptidase_Metallo"/>
</dbReference>
<dbReference type="InterPro" id="IPR035914">
    <property type="entry name" value="Sperma_CUB_dom_sf"/>
</dbReference>
<dbReference type="InterPro" id="IPR034036">
    <property type="entry name" value="ZnMP_TLD/BMP1"/>
</dbReference>
<dbReference type="PANTHER" id="PTHR24251:SF37">
    <property type="entry name" value="CUB DOMAIN-CONTAINING PROTEIN"/>
    <property type="match status" value="1"/>
</dbReference>
<dbReference type="PANTHER" id="PTHR24251">
    <property type="entry name" value="OVOCHYMASE-RELATED"/>
    <property type="match status" value="1"/>
</dbReference>
<dbReference type="Pfam" id="PF01400">
    <property type="entry name" value="Astacin"/>
    <property type="match status" value="1"/>
</dbReference>
<dbReference type="Pfam" id="PF00431">
    <property type="entry name" value="CUB"/>
    <property type="match status" value="5"/>
</dbReference>
<dbReference type="Pfam" id="PF07645">
    <property type="entry name" value="EGF_CA"/>
    <property type="match status" value="1"/>
</dbReference>
<dbReference type="Pfam" id="PF14670">
    <property type="entry name" value="FXa_inhibition"/>
    <property type="match status" value="1"/>
</dbReference>
<dbReference type="PIRSF" id="PIRSF001199">
    <property type="entry name" value="BMP_1/tolloid-like"/>
    <property type="match status" value="1"/>
</dbReference>
<dbReference type="PRINTS" id="PR00480">
    <property type="entry name" value="ASTACIN"/>
</dbReference>
<dbReference type="SMART" id="SM00042">
    <property type="entry name" value="CUB"/>
    <property type="match status" value="5"/>
</dbReference>
<dbReference type="SMART" id="SM00181">
    <property type="entry name" value="EGF"/>
    <property type="match status" value="2"/>
</dbReference>
<dbReference type="SMART" id="SM00179">
    <property type="entry name" value="EGF_CA"/>
    <property type="match status" value="2"/>
</dbReference>
<dbReference type="SMART" id="SM00235">
    <property type="entry name" value="ZnMc"/>
    <property type="match status" value="1"/>
</dbReference>
<dbReference type="SUPFAM" id="SSF57196">
    <property type="entry name" value="EGF/Laminin"/>
    <property type="match status" value="2"/>
</dbReference>
<dbReference type="SUPFAM" id="SSF55486">
    <property type="entry name" value="Metalloproteases ('zincins'), catalytic domain"/>
    <property type="match status" value="1"/>
</dbReference>
<dbReference type="SUPFAM" id="SSF49854">
    <property type="entry name" value="Spermadhesin, CUB domain"/>
    <property type="match status" value="5"/>
</dbReference>
<dbReference type="PROSITE" id="PS51864">
    <property type="entry name" value="ASTACIN"/>
    <property type="match status" value="1"/>
</dbReference>
<dbReference type="PROSITE" id="PS00010">
    <property type="entry name" value="ASX_HYDROXYL"/>
    <property type="match status" value="2"/>
</dbReference>
<dbReference type="PROSITE" id="PS01180">
    <property type="entry name" value="CUB"/>
    <property type="match status" value="5"/>
</dbReference>
<dbReference type="PROSITE" id="PS01186">
    <property type="entry name" value="EGF_2"/>
    <property type="match status" value="2"/>
</dbReference>
<dbReference type="PROSITE" id="PS50026">
    <property type="entry name" value="EGF_3"/>
    <property type="match status" value="2"/>
</dbReference>
<dbReference type="PROSITE" id="PS01187">
    <property type="entry name" value="EGF_CA"/>
    <property type="match status" value="2"/>
</dbReference>
<dbReference type="PROSITE" id="PS00142">
    <property type="entry name" value="ZINC_PROTEASE"/>
    <property type="match status" value="1"/>
</dbReference>
<sequence length="928" mass="104083">MRFSANIAIIVNIIFLFIVVEFVLPTFIRSGDVRFRRYYRNNGRVSRAATAKKERIWPEGIIPFVIASNFSGEHQHLFLRAMRHWENFTCVSFVPRQPHHKHYITFTVDKCGCCSYVGRRGEGPQAISIGKNCDKFGIVVHELGHVVGFWHEHTRPDRDMYVDIFYKSIQTGQDYNFEKSKPEEVDSLGEPYDFSSIMHYARDTFSRGAFYDTILPKPNSGFRLEIGQRVQLSEGDIRQTKKLYKCAECGGTLMQESGNLAIQHAGVCTWHIISPQGHTIFLNITGSTLSPPSSLCGKEEDNVITVRDGVSISSPVLDRICGGDSLFRTIASSGNRMLIQVRSSTPAASLPFATYYAICGGPIYANEGVIHSPKYPESYPPNSDCQWTIHVDENSQVAIEFVYFHLEQHKECIYDRLILTEGISKNSKKDGKEMSETFCGLIEKKTIVSKTNQISLRFFSDNSVQKTGFELRFTKELNECATDKNICHHYCVNTVGGFKCACRVGYSLSSNGFSCDSTCGGYLKASNGSISSPNFPEMYPNSKTCIWEIEAPDGYHIFLNFTKFNVEGMKTECAYDYVKIGDSEKLCGEYHEALLFTTPRNRVRIEFSSDSSVERDGFFANFIADFDECQNDNAGCEHTCQNRLGSYVCTCNPGYILAEDKHNCKEGSCFFEVNAPAGDINSPNYPNDYPKGQNCSWHFVTTPGHRLMLTFSSFQVEEHAQCKYDAVSVYDGGDGSAQLAGVFCGLAPPPLLLSSSNELYLTFSSDASVSRRGFQAHYTSLCGGRLTAESTPGHIYSHATFSDSKYGKNQDCSWIVRAKSPGRGVRIQFSTFNIESEEGCQYDYIEIYDGPEATLERLVGRFCGDTSPEVITSTGPELLLIMHTDNAEEEKGFVAEYREAPRSSSTKRTFVSKTRHSPLEEPIHDRNE</sequence>
<accession>Q20176</accession>
<feature type="signal peptide" evidence="3">
    <location>
        <begin position="1"/>
        <end position="30"/>
    </location>
</feature>
<feature type="propeptide" id="PRO_0000442685" evidence="9">
    <location>
        <begin position="31"/>
        <end status="unknown"/>
    </location>
</feature>
<feature type="chain" id="PRO_0000028943" description="Zinc metalloproteinase nas-39">
    <location>
        <begin status="unknown"/>
        <end position="928"/>
    </location>
</feature>
<feature type="domain" description="Peptidase M12A" evidence="6">
    <location>
        <begin position="48"/>
        <end position="247"/>
    </location>
</feature>
<feature type="domain" description="CUB 1" evidence="4">
    <location>
        <begin position="249"/>
        <end position="359"/>
    </location>
</feature>
<feature type="domain" description="CUB 2" evidence="4">
    <location>
        <begin position="360"/>
        <end position="476"/>
    </location>
</feature>
<feature type="domain" description="EGF-like 1; calcium-binding" evidence="5">
    <location>
        <begin position="477"/>
        <end position="516"/>
    </location>
</feature>
<feature type="domain" description="CUB 3" evidence="4">
    <location>
        <begin position="519"/>
        <end position="625"/>
    </location>
</feature>
<feature type="domain" description="EGF-like 2; calcium-binding" evidence="5">
    <location>
        <begin position="626"/>
        <end position="665"/>
    </location>
</feature>
<feature type="domain" description="CUB 4" evidence="4">
    <location>
        <begin position="669"/>
        <end position="781"/>
    </location>
</feature>
<feature type="domain" description="CUB 5" evidence="4">
    <location>
        <begin position="782"/>
        <end position="900"/>
    </location>
</feature>
<feature type="region of interest" description="Disordered" evidence="7">
    <location>
        <begin position="895"/>
        <end position="928"/>
    </location>
</feature>
<feature type="compositionally biased region" description="Polar residues" evidence="7">
    <location>
        <begin position="902"/>
        <end position="912"/>
    </location>
</feature>
<feature type="compositionally biased region" description="Basic and acidic residues" evidence="7">
    <location>
        <begin position="917"/>
        <end position="928"/>
    </location>
</feature>
<feature type="active site" evidence="6">
    <location>
        <position position="142"/>
    </location>
</feature>
<feature type="binding site" evidence="6">
    <location>
        <position position="141"/>
    </location>
    <ligand>
        <name>Zn(2+)</name>
        <dbReference type="ChEBI" id="CHEBI:29105"/>
        <note>catalytic</note>
    </ligand>
</feature>
<feature type="binding site" evidence="6">
    <location>
        <position position="145"/>
    </location>
    <ligand>
        <name>Zn(2+)</name>
        <dbReference type="ChEBI" id="CHEBI:29105"/>
        <note>catalytic</note>
    </ligand>
</feature>
<feature type="binding site" evidence="6">
    <location>
        <position position="151"/>
    </location>
    <ligand>
        <name>Zn(2+)</name>
        <dbReference type="ChEBI" id="CHEBI:29105"/>
        <note>catalytic</note>
    </ligand>
</feature>
<feature type="glycosylation site" description="N-linked (GlcNAc...) asparagine" evidence="3">
    <location>
        <position position="69"/>
    </location>
</feature>
<feature type="glycosylation site" description="N-linked (GlcNAc...) asparagine" evidence="3">
    <location>
        <position position="87"/>
    </location>
</feature>
<feature type="glycosylation site" description="N-linked (GlcNAc...) asparagine" evidence="3">
    <location>
        <position position="283"/>
    </location>
</feature>
<feature type="glycosylation site" description="N-linked (GlcNAc...) asparagine" evidence="3">
    <location>
        <position position="527"/>
    </location>
</feature>
<feature type="glycosylation site" description="N-linked (GlcNAc...) asparagine" evidence="3">
    <location>
        <position position="560"/>
    </location>
</feature>
<feature type="glycosylation site" description="N-linked (GlcNAc...) asparagine" evidence="3">
    <location>
        <position position="694"/>
    </location>
</feature>
<feature type="disulfide bond" evidence="6">
    <location>
        <begin position="90"/>
        <end position="246"/>
    </location>
</feature>
<feature type="disulfide bond" evidence="6">
    <location>
        <begin position="111"/>
        <end position="133"/>
    </location>
</feature>
<feature type="disulfide bond" evidence="6">
    <location>
        <begin position="113"/>
        <end position="114"/>
    </location>
</feature>
<feature type="disulfide bond" evidence="4">
    <location>
        <begin position="249"/>
        <end position="268"/>
    </location>
</feature>
<feature type="disulfide bond" evidence="4">
    <location>
        <begin position="359"/>
        <end position="385"/>
    </location>
</feature>
<feature type="disulfide bond" evidence="4">
    <location>
        <begin position="412"/>
        <end position="439"/>
    </location>
</feature>
<feature type="disulfide bond" evidence="4">
    <location>
        <begin position="480"/>
        <end position="491"/>
    </location>
</feature>
<feature type="disulfide bond" evidence="4">
    <location>
        <begin position="487"/>
        <end position="500"/>
    </location>
</feature>
<feature type="disulfide bond" evidence="4">
    <location>
        <begin position="502"/>
        <end position="515"/>
    </location>
</feature>
<feature type="disulfide bond" evidence="4">
    <location>
        <begin position="519"/>
        <end position="545"/>
    </location>
</feature>
<feature type="disulfide bond" evidence="4">
    <location>
        <begin position="573"/>
        <end position="587"/>
    </location>
</feature>
<feature type="disulfide bond" evidence="4">
    <location>
        <begin position="629"/>
        <end position="640"/>
    </location>
</feature>
<feature type="disulfide bond" evidence="4">
    <location>
        <begin position="636"/>
        <end position="649"/>
    </location>
</feature>
<feature type="disulfide bond" evidence="4">
    <location>
        <begin position="651"/>
        <end position="664"/>
    </location>
</feature>
<feature type="disulfide bond" evidence="4">
    <location>
        <begin position="669"/>
        <end position="695"/>
    </location>
</feature>
<feature type="disulfide bond" evidence="4">
    <location>
        <begin position="722"/>
        <end position="744"/>
    </location>
</feature>
<feature type="disulfide bond" evidence="4">
    <location>
        <begin position="782"/>
        <end position="812"/>
    </location>
</feature>
<feature type="disulfide bond" evidence="4">
    <location>
        <begin position="840"/>
        <end position="863"/>
    </location>
</feature>
<comment type="function">
    <text evidence="2">Metalloprotease.</text>
</comment>
<comment type="cofactor">
    <cofactor evidence="6">
        <name>Zn(2+)</name>
        <dbReference type="ChEBI" id="CHEBI:29105"/>
    </cofactor>
    <text evidence="6">Binds 1 zinc ion per subunit.</text>
</comment>
<comment type="subcellular location">
    <subcellularLocation>
        <location evidence="9">Secreted</location>
    </subcellularLocation>
</comment>
<comment type="tissue specificity">
    <text evidence="8">Expressed in pharyngeal, vulva and body wall muscles, intestine and several neurons.</text>
</comment>
<comment type="disruption phenotype">
    <text evidence="8">No visible phenotype.</text>
</comment>
<reference key="1">
    <citation type="journal article" date="1998" name="Science">
        <title>Genome sequence of the nematode C. elegans: a platform for investigating biology.</title>
        <authorList>
            <consortium name="The C. elegans sequencing consortium"/>
        </authorList>
    </citation>
    <scope>NUCLEOTIDE SEQUENCE [LARGE SCALE GENOMIC DNA]</scope>
    <source>
        <strain>Bristol N2</strain>
    </source>
</reference>
<reference key="2">
    <citation type="journal article" date="2003" name="Eur. J. Biochem.">
        <title>The astacin protein family in Caenorhabditis elegans.</title>
        <authorList>
            <person name="Moehrlen F."/>
            <person name="Hutter H."/>
            <person name="Zwilling R."/>
        </authorList>
    </citation>
    <scope>IDENTIFICATION</scope>
    <scope>NOMENCLATURE</scope>
</reference>
<reference key="3">
    <citation type="journal article" date="2010" name="BMC Dev. Biol.">
        <title>Characterization of the astacin family of metalloproteases in C. elegans.</title>
        <authorList>
            <person name="Park J.O."/>
            <person name="Pan J."/>
            <person name="Moehrlen F."/>
            <person name="Schupp M.O."/>
            <person name="Johnsen R."/>
            <person name="Baillie D.L."/>
            <person name="Zapf R."/>
            <person name="Moerman D.G."/>
            <person name="Hutter H."/>
        </authorList>
    </citation>
    <scope>TISSUE SPECIFICITY</scope>
    <scope>DISRUPTION PHENOTYPE</scope>
</reference>
<proteinExistence type="evidence at transcript level"/>